<organism>
    <name type="scientific">Saccharomyces cerevisiae (strain ATCC 204508 / S288c)</name>
    <name type="common">Baker's yeast</name>
    <dbReference type="NCBI Taxonomy" id="559292"/>
    <lineage>
        <taxon>Eukaryota</taxon>
        <taxon>Fungi</taxon>
        <taxon>Dikarya</taxon>
        <taxon>Ascomycota</taxon>
        <taxon>Saccharomycotina</taxon>
        <taxon>Saccharomycetes</taxon>
        <taxon>Saccharomycetales</taxon>
        <taxon>Saccharomycetaceae</taxon>
        <taxon>Saccharomyces</taxon>
    </lineage>
</organism>
<keyword id="KW-1185">Reference proteome</keyword>
<keyword id="KW-0832">Ubl conjugation</keyword>
<keyword id="KW-0833">Ubl conjugation pathway</keyword>
<proteinExistence type="evidence at protein level"/>
<feature type="chain" id="PRO_0000253805" description="F-box protein YDR306C">
    <location>
        <begin position="1"/>
        <end position="478"/>
    </location>
</feature>
<feature type="domain" description="F-box">
    <location>
        <begin position="112"/>
        <end position="173"/>
    </location>
</feature>
<feature type="region of interest" description="Disordered" evidence="2">
    <location>
        <begin position="1"/>
        <end position="32"/>
    </location>
</feature>
<feature type="region of interest" description="Disordered" evidence="2">
    <location>
        <begin position="67"/>
        <end position="101"/>
    </location>
</feature>
<feature type="compositionally biased region" description="Basic residues" evidence="2">
    <location>
        <begin position="1"/>
        <end position="14"/>
    </location>
</feature>
<feature type="compositionally biased region" description="Low complexity" evidence="2">
    <location>
        <begin position="80"/>
        <end position="90"/>
    </location>
</feature>
<feature type="compositionally biased region" description="Basic and acidic residues" evidence="2">
    <location>
        <begin position="91"/>
        <end position="101"/>
    </location>
</feature>
<gene>
    <name type="ordered locus">YDR306C</name>
</gene>
<comment type="function">
    <text evidence="1">Substrate recognition component of a SCF (SKP1-CUL1-F-box protein) E3 ubiquitin-protein ligase complex which mediates the ubiquitination and subsequent proteasomal degradation of target proteins. Probably recognizes and binds to phosphorylated target proteins (By similarity).</text>
</comment>
<comment type="pathway">
    <text>Protein modification; protein ubiquitination.</text>
</comment>
<comment type="subunit">
    <text evidence="3">Interacts with SKP1. Component of the probable SCF(YDR306C) complex containing CDC53, SKP1, RBX1 and YDR306C.</text>
</comment>
<comment type="interaction">
    <interactant intactId="EBI-34097">
        <id>Q06640</id>
    </interactant>
    <interactant intactId="EBI-4090">
        <id>P52286</id>
        <label>SKP1</label>
    </interactant>
    <organismsDiffer>false</organismsDiffer>
    <experiments>3</experiments>
</comment>
<comment type="domain">
    <text>The F-box domain contains an unusual insert of 18 residues (131-148).</text>
</comment>
<comment type="PTM">
    <text evidence="3">Autoubiquitinated by the E3 ubiquitin ligase complex in conjunction with the E2 enzyme CDC34.</text>
</comment>
<evidence type="ECO:0000250" key="1"/>
<evidence type="ECO:0000256" key="2">
    <source>
        <dbReference type="SAM" id="MobiDB-lite"/>
    </source>
</evidence>
<evidence type="ECO:0000269" key="3">
    <source>
    </source>
</evidence>
<protein>
    <recommendedName>
        <fullName>F-box protein YDR306C</fullName>
    </recommendedName>
</protein>
<name>YD306_YEAST</name>
<accession>Q06640</accession>
<accession>D6VST5</accession>
<reference key="1">
    <citation type="journal article" date="1997" name="Nature">
        <title>The nucleotide sequence of Saccharomyces cerevisiae chromosome IV.</title>
        <authorList>
            <person name="Jacq C."/>
            <person name="Alt-Moerbe J."/>
            <person name="Andre B."/>
            <person name="Arnold W."/>
            <person name="Bahr A."/>
            <person name="Ballesta J.P.G."/>
            <person name="Bargues M."/>
            <person name="Baron L."/>
            <person name="Becker A."/>
            <person name="Biteau N."/>
            <person name="Bloecker H."/>
            <person name="Blugeon C."/>
            <person name="Boskovic J."/>
            <person name="Brandt P."/>
            <person name="Brueckner M."/>
            <person name="Buitrago M.J."/>
            <person name="Coster F."/>
            <person name="Delaveau T."/>
            <person name="del Rey F."/>
            <person name="Dujon B."/>
            <person name="Eide L.G."/>
            <person name="Garcia-Cantalejo J.M."/>
            <person name="Goffeau A."/>
            <person name="Gomez-Peris A."/>
            <person name="Granotier C."/>
            <person name="Hanemann V."/>
            <person name="Hankeln T."/>
            <person name="Hoheisel J.D."/>
            <person name="Jaeger W."/>
            <person name="Jimenez A."/>
            <person name="Jonniaux J.-L."/>
            <person name="Kraemer C."/>
            <person name="Kuester H."/>
            <person name="Laamanen P."/>
            <person name="Legros Y."/>
            <person name="Louis E.J."/>
            <person name="Moeller-Rieker S."/>
            <person name="Monnet A."/>
            <person name="Moro M."/>
            <person name="Mueller-Auer S."/>
            <person name="Nussbaumer B."/>
            <person name="Paricio N."/>
            <person name="Paulin L."/>
            <person name="Perea J."/>
            <person name="Perez-Alonso M."/>
            <person name="Perez-Ortin J.E."/>
            <person name="Pohl T.M."/>
            <person name="Prydz H."/>
            <person name="Purnelle B."/>
            <person name="Rasmussen S.W."/>
            <person name="Remacha M.A."/>
            <person name="Revuelta J.L."/>
            <person name="Rieger M."/>
            <person name="Salom D."/>
            <person name="Saluz H.P."/>
            <person name="Saiz J.E."/>
            <person name="Saren A.-M."/>
            <person name="Schaefer M."/>
            <person name="Scharfe M."/>
            <person name="Schmidt E.R."/>
            <person name="Schneider C."/>
            <person name="Scholler P."/>
            <person name="Schwarz S."/>
            <person name="Soler-Mira A."/>
            <person name="Urrestarazu L.A."/>
            <person name="Verhasselt P."/>
            <person name="Vissers S."/>
            <person name="Voet M."/>
            <person name="Volckaert G."/>
            <person name="Wagner G."/>
            <person name="Wambutt R."/>
            <person name="Wedler E."/>
            <person name="Wedler H."/>
            <person name="Woelfl S."/>
            <person name="Harris D.E."/>
            <person name="Bowman S."/>
            <person name="Brown D."/>
            <person name="Churcher C.M."/>
            <person name="Connor R."/>
            <person name="Dedman K."/>
            <person name="Gentles S."/>
            <person name="Hamlin N."/>
            <person name="Hunt S."/>
            <person name="Jones L."/>
            <person name="McDonald S."/>
            <person name="Murphy L.D."/>
            <person name="Niblett D."/>
            <person name="Odell C."/>
            <person name="Oliver K."/>
            <person name="Rajandream M.A."/>
            <person name="Richards C."/>
            <person name="Shore L."/>
            <person name="Walsh S.V."/>
            <person name="Barrell B.G."/>
            <person name="Dietrich F.S."/>
            <person name="Mulligan J.T."/>
            <person name="Allen E."/>
            <person name="Araujo R."/>
            <person name="Aviles E."/>
            <person name="Berno A."/>
            <person name="Carpenter J."/>
            <person name="Chen E."/>
            <person name="Cherry J.M."/>
            <person name="Chung E."/>
            <person name="Duncan M."/>
            <person name="Hunicke-Smith S."/>
            <person name="Hyman R.W."/>
            <person name="Komp C."/>
            <person name="Lashkari D."/>
            <person name="Lew H."/>
            <person name="Lin D."/>
            <person name="Mosedale D."/>
            <person name="Nakahara K."/>
            <person name="Namath A."/>
            <person name="Oefner P."/>
            <person name="Oh C."/>
            <person name="Petel F.X."/>
            <person name="Roberts D."/>
            <person name="Schramm S."/>
            <person name="Schroeder M."/>
            <person name="Shogren T."/>
            <person name="Shroff N."/>
            <person name="Winant A."/>
            <person name="Yelton M.A."/>
            <person name="Botstein D."/>
            <person name="Davis R.W."/>
            <person name="Johnston M."/>
            <person name="Andrews S."/>
            <person name="Brinkman R."/>
            <person name="Cooper J."/>
            <person name="Ding H."/>
            <person name="Du Z."/>
            <person name="Favello A."/>
            <person name="Fulton L."/>
            <person name="Gattung S."/>
            <person name="Greco T."/>
            <person name="Hallsworth K."/>
            <person name="Hawkins J."/>
            <person name="Hillier L.W."/>
            <person name="Jier M."/>
            <person name="Johnson D."/>
            <person name="Johnston L."/>
            <person name="Kirsten J."/>
            <person name="Kucaba T."/>
            <person name="Langston Y."/>
            <person name="Latreille P."/>
            <person name="Le T."/>
            <person name="Mardis E."/>
            <person name="Menezes S."/>
            <person name="Miller N."/>
            <person name="Nhan M."/>
            <person name="Pauley A."/>
            <person name="Peluso D."/>
            <person name="Rifkin L."/>
            <person name="Riles L."/>
            <person name="Taich A."/>
            <person name="Trevaskis E."/>
            <person name="Vignati D."/>
            <person name="Wilcox L."/>
            <person name="Wohldman P."/>
            <person name="Vaudin M."/>
            <person name="Wilson R."/>
            <person name="Waterston R."/>
            <person name="Albermann K."/>
            <person name="Hani J."/>
            <person name="Heumann K."/>
            <person name="Kleine K."/>
            <person name="Mewes H.-W."/>
            <person name="Zollner A."/>
            <person name="Zaccaria P."/>
        </authorList>
    </citation>
    <scope>NUCLEOTIDE SEQUENCE [LARGE SCALE GENOMIC DNA]</scope>
    <source>
        <strain>ATCC 204508 / S288c</strain>
    </source>
</reference>
<reference key="2">
    <citation type="journal article" date="2014" name="G3 (Bethesda)">
        <title>The reference genome sequence of Saccharomyces cerevisiae: Then and now.</title>
        <authorList>
            <person name="Engel S.R."/>
            <person name="Dietrich F.S."/>
            <person name="Fisk D.G."/>
            <person name="Binkley G."/>
            <person name="Balakrishnan R."/>
            <person name="Costanzo M.C."/>
            <person name="Dwight S.S."/>
            <person name="Hitz B.C."/>
            <person name="Karra K."/>
            <person name="Nash R.S."/>
            <person name="Weng S."/>
            <person name="Wong E.D."/>
            <person name="Lloyd P."/>
            <person name="Skrzypek M.S."/>
            <person name="Miyasato S.R."/>
            <person name="Simison M."/>
            <person name="Cherry J.M."/>
        </authorList>
    </citation>
    <scope>GENOME REANNOTATION</scope>
    <source>
        <strain>ATCC 204508 / S288c</strain>
    </source>
</reference>
<reference key="3">
    <citation type="journal article" date="2004" name="Proteins">
        <title>Functional interaction of 13 yeast SCF complexes with a set of yeast E2 enzymes in vitro.</title>
        <authorList>
            <person name="Kus B.M."/>
            <person name="Caldon C.E."/>
            <person name="Andorn-Broza R."/>
            <person name="Edwards A.M."/>
        </authorList>
    </citation>
    <scope>INTERACTION WITH SKP1</scope>
    <scope>RECONSTITUTION OF THE SCF(YDR306C) COMPLEX</scope>
    <scope>UBIQUITINATION</scope>
</reference>
<sequence>MANKSRPKKIKAPYRKYVAGEGFSSTRNDNKAKEFTITIPEDAELIETPQGSYYYDETNDTIVKLTRLSNEKKDKKGRKQSPSSSSTSSSKGEKNGKVIESEEARMHSVSVKMVLPWEIQHRIIHYLDIPEKEEKLNKTANGKKTTTGINMNYLLVCRNWYAMCLPKLYYAPALTSKNFNGFVDTIIINKKKNLGHYVFELNLSTILQSGRNSFVSKLLRRCCSNLTKFIAPQTSFGYAPLISLKSCHDLKFLDLGLVSETVKLKELFSAIKNFTKLTHLSFPRSSIDCQGFQDIQWPQNLRYLKLSGGITNEFVIDTKWPTTITTLEFSYCPQITELSIYSLLSQIGDNLKHLFFHYPMPSLAENSLDHVFTYCANLISLQLMVDYCSKWCFSEFMLSKLVEYDRPLKTLYLECSGSLGLASKIHPDDLTIAILESRLPCLKNICVSPKLGWNMKSDEVADLVVSLEDQDGSLYLNY</sequence>
<dbReference type="EMBL" id="U28374">
    <property type="protein sequence ID" value="AAB64742.1"/>
    <property type="molecule type" value="Genomic_DNA"/>
</dbReference>
<dbReference type="EMBL" id="BK006938">
    <property type="protein sequence ID" value="DAA12145.1"/>
    <property type="molecule type" value="Genomic_DNA"/>
</dbReference>
<dbReference type="PIR" id="S61192">
    <property type="entry name" value="S61192"/>
</dbReference>
<dbReference type="SMR" id="Q06640"/>
<dbReference type="BioGRID" id="32358">
    <property type="interactions" value="64"/>
</dbReference>
<dbReference type="DIP" id="DIP-5370N"/>
<dbReference type="FunCoup" id="Q06640">
    <property type="interactions" value="47"/>
</dbReference>
<dbReference type="IntAct" id="Q06640">
    <property type="interactions" value="15"/>
</dbReference>
<dbReference type="MINT" id="Q06640"/>
<dbReference type="STRING" id="4932.YDR306C"/>
<dbReference type="iPTMnet" id="Q06640"/>
<dbReference type="PaxDb" id="4932-YDR306C"/>
<dbReference type="PeptideAtlas" id="Q06640"/>
<dbReference type="EnsemblFungi" id="YDR306C_mRNA">
    <property type="protein sequence ID" value="YDR306C"/>
    <property type="gene ID" value="YDR306C"/>
</dbReference>
<dbReference type="KEGG" id="sce:YDR306C"/>
<dbReference type="AGR" id="SGD:S000002714"/>
<dbReference type="SGD" id="S000002714">
    <property type="gene designation" value="YDR306C"/>
</dbReference>
<dbReference type="VEuPathDB" id="FungiDB:YDR306C"/>
<dbReference type="eggNOG" id="ENOG502QSAP">
    <property type="taxonomic scope" value="Eukaryota"/>
</dbReference>
<dbReference type="HOGENOM" id="CLU_042679_1_0_1"/>
<dbReference type="InParanoid" id="Q06640"/>
<dbReference type="OMA" id="AINCWAS"/>
<dbReference type="OrthoDB" id="2125396at2759"/>
<dbReference type="BioCyc" id="YEAST:G3O-29865-MONOMER"/>
<dbReference type="Reactome" id="R-SCE-8854050">
    <property type="pathway name" value="FBXL7 down-regulates AURKA during mitotic entry and in early mitosis"/>
</dbReference>
<dbReference type="Reactome" id="R-SCE-917937">
    <property type="pathway name" value="Iron uptake and transport"/>
</dbReference>
<dbReference type="Reactome" id="R-SCE-983168">
    <property type="pathway name" value="Antigen processing: Ubiquitination &amp; Proteasome degradation"/>
</dbReference>
<dbReference type="UniPathway" id="UPA00143"/>
<dbReference type="BioGRID-ORCS" id="851900">
    <property type="hits" value="1 hit in 10 CRISPR screens"/>
</dbReference>
<dbReference type="PRO" id="PR:Q06640"/>
<dbReference type="Proteomes" id="UP000002311">
    <property type="component" value="Chromosome IV"/>
</dbReference>
<dbReference type="RNAct" id="Q06640">
    <property type="molecule type" value="protein"/>
</dbReference>
<dbReference type="GO" id="GO:0019005">
    <property type="term" value="C:SCF ubiquitin ligase complex"/>
    <property type="evidence" value="ECO:0000314"/>
    <property type="project" value="SGD"/>
</dbReference>
<dbReference type="GO" id="GO:0030674">
    <property type="term" value="F:protein-macromolecule adaptor activity"/>
    <property type="evidence" value="ECO:0000247"/>
    <property type="project" value="SGD"/>
</dbReference>
<dbReference type="GO" id="GO:0016567">
    <property type="term" value="P:protein ubiquitination"/>
    <property type="evidence" value="ECO:0007669"/>
    <property type="project" value="UniProtKB-UniPathway"/>
</dbReference>
<dbReference type="GO" id="GO:0031146">
    <property type="term" value="P:SCF-dependent proteasomal ubiquitin-dependent protein catabolic process"/>
    <property type="evidence" value="ECO:0000247"/>
    <property type="project" value="SGD"/>
</dbReference>
<dbReference type="FunFam" id="3.80.10.10:FF:000859">
    <property type="entry name" value="YDR306C-like protein"/>
    <property type="match status" value="1"/>
</dbReference>
<dbReference type="Gene3D" id="3.80.10.10">
    <property type="entry name" value="Ribonuclease Inhibitor"/>
    <property type="match status" value="1"/>
</dbReference>
<dbReference type="InterPro" id="IPR032675">
    <property type="entry name" value="LRR_dom_sf"/>
</dbReference>
<dbReference type="SUPFAM" id="SSF52047">
    <property type="entry name" value="RNI-like"/>
    <property type="match status" value="1"/>
</dbReference>